<dbReference type="EC" id="2.8.1.6" evidence="1"/>
<dbReference type="EMBL" id="CP000967">
    <property type="protein sequence ID" value="ACD61342.1"/>
    <property type="molecule type" value="Genomic_DNA"/>
</dbReference>
<dbReference type="RefSeq" id="WP_011257387.1">
    <property type="nucleotide sequence ID" value="NC_010717.2"/>
</dbReference>
<dbReference type="SMR" id="B2SS67"/>
<dbReference type="KEGG" id="xop:PXO_02874"/>
<dbReference type="eggNOG" id="COG0502">
    <property type="taxonomic scope" value="Bacteria"/>
</dbReference>
<dbReference type="HOGENOM" id="CLU_033172_1_2_6"/>
<dbReference type="UniPathway" id="UPA00078">
    <property type="reaction ID" value="UER00162"/>
</dbReference>
<dbReference type="Proteomes" id="UP000001740">
    <property type="component" value="Chromosome"/>
</dbReference>
<dbReference type="GO" id="GO:0051537">
    <property type="term" value="F:2 iron, 2 sulfur cluster binding"/>
    <property type="evidence" value="ECO:0007669"/>
    <property type="project" value="UniProtKB-KW"/>
</dbReference>
<dbReference type="GO" id="GO:0051539">
    <property type="term" value="F:4 iron, 4 sulfur cluster binding"/>
    <property type="evidence" value="ECO:0007669"/>
    <property type="project" value="UniProtKB-KW"/>
</dbReference>
<dbReference type="GO" id="GO:0004076">
    <property type="term" value="F:biotin synthase activity"/>
    <property type="evidence" value="ECO:0007669"/>
    <property type="project" value="UniProtKB-UniRule"/>
</dbReference>
<dbReference type="GO" id="GO:0005506">
    <property type="term" value="F:iron ion binding"/>
    <property type="evidence" value="ECO:0007669"/>
    <property type="project" value="UniProtKB-UniRule"/>
</dbReference>
<dbReference type="GO" id="GO:0009102">
    <property type="term" value="P:biotin biosynthetic process"/>
    <property type="evidence" value="ECO:0007669"/>
    <property type="project" value="UniProtKB-UniRule"/>
</dbReference>
<dbReference type="CDD" id="cd01335">
    <property type="entry name" value="Radical_SAM"/>
    <property type="match status" value="1"/>
</dbReference>
<dbReference type="FunFam" id="3.20.20.70:FF:000011">
    <property type="entry name" value="Biotin synthase"/>
    <property type="match status" value="1"/>
</dbReference>
<dbReference type="Gene3D" id="3.20.20.70">
    <property type="entry name" value="Aldolase class I"/>
    <property type="match status" value="1"/>
</dbReference>
<dbReference type="HAMAP" id="MF_01694">
    <property type="entry name" value="BioB"/>
    <property type="match status" value="1"/>
</dbReference>
<dbReference type="InterPro" id="IPR013785">
    <property type="entry name" value="Aldolase_TIM"/>
</dbReference>
<dbReference type="InterPro" id="IPR010722">
    <property type="entry name" value="BATS_dom"/>
</dbReference>
<dbReference type="InterPro" id="IPR002684">
    <property type="entry name" value="Biotin_synth/BioAB"/>
</dbReference>
<dbReference type="InterPro" id="IPR024177">
    <property type="entry name" value="Biotin_synthase"/>
</dbReference>
<dbReference type="InterPro" id="IPR006638">
    <property type="entry name" value="Elp3/MiaA/NifB-like_rSAM"/>
</dbReference>
<dbReference type="InterPro" id="IPR007197">
    <property type="entry name" value="rSAM"/>
</dbReference>
<dbReference type="NCBIfam" id="TIGR00433">
    <property type="entry name" value="bioB"/>
    <property type="match status" value="1"/>
</dbReference>
<dbReference type="PANTHER" id="PTHR22976">
    <property type="entry name" value="BIOTIN SYNTHASE"/>
    <property type="match status" value="1"/>
</dbReference>
<dbReference type="PANTHER" id="PTHR22976:SF2">
    <property type="entry name" value="BIOTIN SYNTHASE, MITOCHONDRIAL"/>
    <property type="match status" value="1"/>
</dbReference>
<dbReference type="Pfam" id="PF06968">
    <property type="entry name" value="BATS"/>
    <property type="match status" value="1"/>
</dbReference>
<dbReference type="Pfam" id="PF04055">
    <property type="entry name" value="Radical_SAM"/>
    <property type="match status" value="1"/>
</dbReference>
<dbReference type="PIRSF" id="PIRSF001619">
    <property type="entry name" value="Biotin_synth"/>
    <property type="match status" value="1"/>
</dbReference>
<dbReference type="SFLD" id="SFLDF00272">
    <property type="entry name" value="biotin_synthase"/>
    <property type="match status" value="1"/>
</dbReference>
<dbReference type="SFLD" id="SFLDS00029">
    <property type="entry name" value="Radical_SAM"/>
    <property type="match status" value="1"/>
</dbReference>
<dbReference type="SMART" id="SM00876">
    <property type="entry name" value="BATS"/>
    <property type="match status" value="1"/>
</dbReference>
<dbReference type="SMART" id="SM00729">
    <property type="entry name" value="Elp3"/>
    <property type="match status" value="1"/>
</dbReference>
<dbReference type="SUPFAM" id="SSF102114">
    <property type="entry name" value="Radical SAM enzymes"/>
    <property type="match status" value="1"/>
</dbReference>
<dbReference type="PROSITE" id="PS51918">
    <property type="entry name" value="RADICAL_SAM"/>
    <property type="match status" value="1"/>
</dbReference>
<name>BIOB_XANOP</name>
<keyword id="KW-0001">2Fe-2S</keyword>
<keyword id="KW-0004">4Fe-4S</keyword>
<keyword id="KW-0093">Biotin biosynthesis</keyword>
<keyword id="KW-0408">Iron</keyword>
<keyword id="KW-0411">Iron-sulfur</keyword>
<keyword id="KW-0479">Metal-binding</keyword>
<keyword id="KW-0949">S-adenosyl-L-methionine</keyword>
<keyword id="KW-0808">Transferase</keyword>
<comment type="function">
    <text evidence="1">Catalyzes the conversion of dethiobiotin (DTB) to biotin by the insertion of a sulfur atom into dethiobiotin via a radical-based mechanism.</text>
</comment>
<comment type="catalytic activity">
    <reaction evidence="1">
        <text>(4R,5S)-dethiobiotin + (sulfur carrier)-SH + 2 reduced [2Fe-2S]-[ferredoxin] + 2 S-adenosyl-L-methionine = (sulfur carrier)-H + biotin + 2 5'-deoxyadenosine + 2 L-methionine + 2 oxidized [2Fe-2S]-[ferredoxin]</text>
        <dbReference type="Rhea" id="RHEA:22060"/>
        <dbReference type="Rhea" id="RHEA-COMP:10000"/>
        <dbReference type="Rhea" id="RHEA-COMP:10001"/>
        <dbReference type="Rhea" id="RHEA-COMP:14737"/>
        <dbReference type="Rhea" id="RHEA-COMP:14739"/>
        <dbReference type="ChEBI" id="CHEBI:17319"/>
        <dbReference type="ChEBI" id="CHEBI:29917"/>
        <dbReference type="ChEBI" id="CHEBI:33737"/>
        <dbReference type="ChEBI" id="CHEBI:33738"/>
        <dbReference type="ChEBI" id="CHEBI:57586"/>
        <dbReference type="ChEBI" id="CHEBI:57844"/>
        <dbReference type="ChEBI" id="CHEBI:59789"/>
        <dbReference type="ChEBI" id="CHEBI:64428"/>
        <dbReference type="ChEBI" id="CHEBI:149473"/>
        <dbReference type="EC" id="2.8.1.6"/>
    </reaction>
</comment>
<comment type="cofactor">
    <cofactor evidence="1">
        <name>[4Fe-4S] cluster</name>
        <dbReference type="ChEBI" id="CHEBI:49883"/>
    </cofactor>
    <text evidence="1">Binds 1 [4Fe-4S] cluster. The cluster is coordinated with 3 cysteines and an exchangeable S-adenosyl-L-methionine.</text>
</comment>
<comment type="cofactor">
    <cofactor evidence="1">
        <name>[2Fe-2S] cluster</name>
        <dbReference type="ChEBI" id="CHEBI:190135"/>
    </cofactor>
    <text evidence="1">Binds 1 [2Fe-2S] cluster. The cluster is coordinated with 3 cysteines and 1 arginine.</text>
</comment>
<comment type="pathway">
    <text evidence="1">Cofactor biosynthesis; biotin biosynthesis; biotin from 7,8-diaminononanoate: step 2/2.</text>
</comment>
<comment type="subunit">
    <text evidence="1">Homodimer.</text>
</comment>
<comment type="similarity">
    <text evidence="1">Belongs to the radical SAM superfamily. Biotin synthase family.</text>
</comment>
<proteinExistence type="inferred from homology"/>
<feature type="chain" id="PRO_0000381712" description="Biotin synthase">
    <location>
        <begin position="1"/>
        <end position="344"/>
    </location>
</feature>
<feature type="domain" description="Radical SAM core" evidence="2">
    <location>
        <begin position="40"/>
        <end position="267"/>
    </location>
</feature>
<feature type="binding site" evidence="1">
    <location>
        <position position="55"/>
    </location>
    <ligand>
        <name>[4Fe-4S] cluster</name>
        <dbReference type="ChEBI" id="CHEBI:49883"/>
        <note>4Fe-4S-S-AdoMet</note>
    </ligand>
</feature>
<feature type="binding site" evidence="1">
    <location>
        <position position="59"/>
    </location>
    <ligand>
        <name>[4Fe-4S] cluster</name>
        <dbReference type="ChEBI" id="CHEBI:49883"/>
        <note>4Fe-4S-S-AdoMet</note>
    </ligand>
</feature>
<feature type="binding site" evidence="1">
    <location>
        <position position="62"/>
    </location>
    <ligand>
        <name>[4Fe-4S] cluster</name>
        <dbReference type="ChEBI" id="CHEBI:49883"/>
        <note>4Fe-4S-S-AdoMet</note>
    </ligand>
</feature>
<feature type="binding site" evidence="1">
    <location>
        <position position="99"/>
    </location>
    <ligand>
        <name>[2Fe-2S] cluster</name>
        <dbReference type="ChEBI" id="CHEBI:190135"/>
    </ligand>
</feature>
<feature type="binding site" evidence="1">
    <location>
        <position position="130"/>
    </location>
    <ligand>
        <name>[2Fe-2S] cluster</name>
        <dbReference type="ChEBI" id="CHEBI:190135"/>
    </ligand>
</feature>
<feature type="binding site" evidence="1">
    <location>
        <position position="190"/>
    </location>
    <ligand>
        <name>[2Fe-2S] cluster</name>
        <dbReference type="ChEBI" id="CHEBI:190135"/>
    </ligand>
</feature>
<feature type="binding site" evidence="1">
    <location>
        <position position="262"/>
    </location>
    <ligand>
        <name>[2Fe-2S] cluster</name>
        <dbReference type="ChEBI" id="CHEBI:190135"/>
    </ligand>
</feature>
<accession>B2SS67</accession>
<reference key="1">
    <citation type="journal article" date="2008" name="BMC Genomics">
        <title>Genome sequence and rapid evolution of the rice pathogen Xanthomonas oryzae pv. oryzae PXO99A.</title>
        <authorList>
            <person name="Salzberg S.L."/>
            <person name="Sommer D.D."/>
            <person name="Schatz M.C."/>
            <person name="Phillippy A.M."/>
            <person name="Rabinowicz P.D."/>
            <person name="Tsuge S."/>
            <person name="Furutani A."/>
            <person name="Ochiai H."/>
            <person name="Delcher A.L."/>
            <person name="Kelley D."/>
            <person name="Madupu R."/>
            <person name="Puiu D."/>
            <person name="Radune D."/>
            <person name="Shumway M."/>
            <person name="Trapnell C."/>
            <person name="Aparna G."/>
            <person name="Jha G."/>
            <person name="Pandey A."/>
            <person name="Patil P.B."/>
            <person name="Ishihara H."/>
            <person name="Meyer D.F."/>
            <person name="Szurek B."/>
            <person name="Verdier V."/>
            <person name="Koebnik R."/>
            <person name="Dow J.M."/>
            <person name="Ryan R.P."/>
            <person name="Hirata H."/>
            <person name="Tsuyumu S."/>
            <person name="Won Lee S."/>
            <person name="Seo Y.-S."/>
            <person name="Sriariyanum M."/>
            <person name="Ronald P.C."/>
            <person name="Sonti R.V."/>
            <person name="Van Sluys M.-A."/>
            <person name="Leach J.E."/>
            <person name="White F.F."/>
            <person name="Bogdanove A.J."/>
        </authorList>
    </citation>
    <scope>NUCLEOTIDE SEQUENCE [LARGE SCALE GENOMIC DNA]</scope>
    <source>
        <strain>PXO99A</strain>
    </source>
</reference>
<sequence length="344" mass="37801">MSVVVRHDWDHKELQALFDLPFPELLHRAASVHRAHFDPAEVQVSTLLSVKTGGCPEDCAYCPQAQRYDTGVTAQKLLETEEVVAKARQAKAAGASRFCMGAAWRSPKERDIPKVAAMIREVKAMGLETCATLGMLDAGQARALKDAGLDYYNHNLDTAPDYYDTIIHTRQYQDRLNTLEHVRDVGLKTCCGGIVGMGETRDHRIGLLLALATLPAHPDSVPINQLVQVPGTPLHGTQQLDPFEFVRMIAVARIAMPKSMVRLSAGREAMSDELQALCFLAGANSIFYGEKLLTTGNPDTERDQTLFQRLGLRPMQITVDAAEHDHPATVHAEITRSAACEHTA</sequence>
<gene>
    <name evidence="1" type="primary">bioB</name>
    <name type="ordered locus">PXO_02874</name>
</gene>
<protein>
    <recommendedName>
        <fullName evidence="1">Biotin synthase</fullName>
        <ecNumber evidence="1">2.8.1.6</ecNumber>
    </recommendedName>
</protein>
<evidence type="ECO:0000255" key="1">
    <source>
        <dbReference type="HAMAP-Rule" id="MF_01694"/>
    </source>
</evidence>
<evidence type="ECO:0000255" key="2">
    <source>
        <dbReference type="PROSITE-ProRule" id="PRU01266"/>
    </source>
</evidence>
<organism>
    <name type="scientific">Xanthomonas oryzae pv. oryzae (strain PXO99A)</name>
    <dbReference type="NCBI Taxonomy" id="360094"/>
    <lineage>
        <taxon>Bacteria</taxon>
        <taxon>Pseudomonadati</taxon>
        <taxon>Pseudomonadota</taxon>
        <taxon>Gammaproteobacteria</taxon>
        <taxon>Lysobacterales</taxon>
        <taxon>Lysobacteraceae</taxon>
        <taxon>Xanthomonas</taxon>
    </lineage>
</organism>